<organism>
    <name type="scientific">Ascaphus truei</name>
    <name type="common">Coastal tailed frog</name>
    <dbReference type="NCBI Taxonomy" id="8439"/>
    <lineage>
        <taxon>Eukaryota</taxon>
        <taxon>Metazoa</taxon>
        <taxon>Chordata</taxon>
        <taxon>Craniata</taxon>
        <taxon>Vertebrata</taxon>
        <taxon>Euteleostomi</taxon>
        <taxon>Amphibia</taxon>
        <taxon>Batrachia</taxon>
        <taxon>Anura</taxon>
        <taxon>Ascaphidae</taxon>
        <taxon>Ascaphus</taxon>
    </lineage>
</organism>
<name>ASCA6_ASCTR</name>
<sequence>GFKDWIKGAAKKLIKTVASSIANE</sequence>
<keyword id="KW-0878">Amphibian defense peptide</keyword>
<keyword id="KW-0044">Antibiotic</keyword>
<keyword id="KW-0929">Antimicrobial</keyword>
<keyword id="KW-0903">Direct protein sequencing</keyword>
<keyword id="KW-0964">Secreted</keyword>
<protein>
    <recommendedName>
        <fullName>Ascaphin-6</fullName>
    </recommendedName>
</protein>
<comment type="function">
    <text evidence="1">Antimicrobial peptide that shows higher potency against Gram-negative bacteria than against Gram-positive bacteria. Has a very week hemolytic activity (By similarity).</text>
</comment>
<comment type="subcellular location">
    <subcellularLocation>
        <location>Secreted</location>
    </subcellularLocation>
</comment>
<comment type="tissue specificity">
    <text>Expressed by the skin glands.</text>
</comment>
<comment type="mass spectrometry"/>
<comment type="similarity">
    <text evidence="3">Belongs to the ascaphin family.</text>
</comment>
<comment type="caution">
    <text evidence="3">May represent an artifactually modified form of ascaphin-7 arising from hydrolysis during the purification procedure.</text>
</comment>
<evidence type="ECO:0000250" key="1"/>
<evidence type="ECO:0000269" key="2">
    <source>
    </source>
</evidence>
<evidence type="ECO:0000305" key="3"/>
<proteinExistence type="evidence at protein level"/>
<accession>P0CJ30</accession>
<reference key="1">
    <citation type="journal article" date="2004" name="Biochem. Biophys. Res. Commun.">
        <title>The ascaphins: a family of antimicrobial peptides from the skin secretions of the most primitive extant frog, Ascaphus truei.</title>
        <authorList>
            <person name="Conlon J.M."/>
            <person name="Sonnevend A."/>
            <person name="Davidson C."/>
            <person name="Smith D.D."/>
            <person name="Nielsen P.F."/>
        </authorList>
    </citation>
    <scope>PROTEIN SEQUENCE</scope>
    <scope>MASS SPECTROMETRY</scope>
    <source>
        <tissue>Skin secretion</tissue>
    </source>
</reference>
<dbReference type="GO" id="GO:0005576">
    <property type="term" value="C:extracellular region"/>
    <property type="evidence" value="ECO:0000250"/>
    <property type="project" value="UniProtKB"/>
</dbReference>
<dbReference type="GO" id="GO:0050829">
    <property type="term" value="P:defense response to Gram-negative bacterium"/>
    <property type="evidence" value="ECO:0000250"/>
    <property type="project" value="UniProtKB"/>
</dbReference>
<feature type="peptide" id="PRO_0000406133" description="Ascaphin-6">
    <location>
        <begin position="1"/>
        <end position="24"/>
    </location>
</feature>